<organism>
    <name type="scientific">Emericella nidulans (strain FGSC A4 / ATCC 38163 / CBS 112.46 / NRRL 194 / M139)</name>
    <name type="common">Aspergillus nidulans</name>
    <dbReference type="NCBI Taxonomy" id="227321"/>
    <lineage>
        <taxon>Eukaryota</taxon>
        <taxon>Fungi</taxon>
        <taxon>Dikarya</taxon>
        <taxon>Ascomycota</taxon>
        <taxon>Pezizomycotina</taxon>
        <taxon>Eurotiomycetes</taxon>
        <taxon>Eurotiomycetidae</taxon>
        <taxon>Eurotiales</taxon>
        <taxon>Aspergillaceae</taxon>
        <taxon>Aspergillus</taxon>
        <taxon>Aspergillus subgen. Nidulantes</taxon>
    </lineage>
</organism>
<reference key="1">
    <citation type="journal article" date="2005" name="Nature">
        <title>Sequencing of Aspergillus nidulans and comparative analysis with A. fumigatus and A. oryzae.</title>
        <authorList>
            <person name="Galagan J.E."/>
            <person name="Calvo S.E."/>
            <person name="Cuomo C."/>
            <person name="Ma L.-J."/>
            <person name="Wortman J.R."/>
            <person name="Batzoglou S."/>
            <person name="Lee S.-I."/>
            <person name="Bastuerkmen M."/>
            <person name="Spevak C.C."/>
            <person name="Clutterbuck J."/>
            <person name="Kapitonov V."/>
            <person name="Jurka J."/>
            <person name="Scazzocchio C."/>
            <person name="Farman M.L."/>
            <person name="Butler J."/>
            <person name="Purcell S."/>
            <person name="Harris S."/>
            <person name="Braus G.H."/>
            <person name="Draht O."/>
            <person name="Busch S."/>
            <person name="D'Enfert C."/>
            <person name="Bouchier C."/>
            <person name="Goldman G.H."/>
            <person name="Bell-Pedersen D."/>
            <person name="Griffiths-Jones S."/>
            <person name="Doonan J.H."/>
            <person name="Yu J."/>
            <person name="Vienken K."/>
            <person name="Pain A."/>
            <person name="Freitag M."/>
            <person name="Selker E.U."/>
            <person name="Archer D.B."/>
            <person name="Penalva M.A."/>
            <person name="Oakley B.R."/>
            <person name="Momany M."/>
            <person name="Tanaka T."/>
            <person name="Kumagai T."/>
            <person name="Asai K."/>
            <person name="Machida M."/>
            <person name="Nierman W.C."/>
            <person name="Denning D.W."/>
            <person name="Caddick M.X."/>
            <person name="Hynes M."/>
            <person name="Paoletti M."/>
            <person name="Fischer R."/>
            <person name="Miller B.L."/>
            <person name="Dyer P.S."/>
            <person name="Sachs M.S."/>
            <person name="Osmani S.A."/>
            <person name="Birren B.W."/>
        </authorList>
    </citation>
    <scope>NUCLEOTIDE SEQUENCE [LARGE SCALE GENOMIC DNA]</scope>
    <source>
        <strain>FGSC A4 / ATCC 38163 / CBS 112.46 / NRRL 194 / M139</strain>
    </source>
</reference>
<reference key="2">
    <citation type="journal article" date="2009" name="Fungal Genet. Biol.">
        <title>The 2008 update of the Aspergillus nidulans genome annotation: a community effort.</title>
        <authorList>
            <person name="Wortman J.R."/>
            <person name="Gilsenan J.M."/>
            <person name="Joardar V."/>
            <person name="Deegan J."/>
            <person name="Clutterbuck J."/>
            <person name="Andersen M.R."/>
            <person name="Archer D."/>
            <person name="Bencina M."/>
            <person name="Braus G."/>
            <person name="Coutinho P."/>
            <person name="von Dohren H."/>
            <person name="Doonan J."/>
            <person name="Driessen A.J."/>
            <person name="Durek P."/>
            <person name="Espeso E."/>
            <person name="Fekete E."/>
            <person name="Flipphi M."/>
            <person name="Estrada C.G."/>
            <person name="Geysens S."/>
            <person name="Goldman G."/>
            <person name="de Groot P.W."/>
            <person name="Hansen K."/>
            <person name="Harris S.D."/>
            <person name="Heinekamp T."/>
            <person name="Helmstaedt K."/>
            <person name="Henrissat B."/>
            <person name="Hofmann G."/>
            <person name="Homan T."/>
            <person name="Horio T."/>
            <person name="Horiuchi H."/>
            <person name="James S."/>
            <person name="Jones M."/>
            <person name="Karaffa L."/>
            <person name="Karanyi Z."/>
            <person name="Kato M."/>
            <person name="Keller N."/>
            <person name="Kelly D.E."/>
            <person name="Kiel J.A."/>
            <person name="Kim J.M."/>
            <person name="van der Klei I.J."/>
            <person name="Klis F.M."/>
            <person name="Kovalchuk A."/>
            <person name="Krasevec N."/>
            <person name="Kubicek C.P."/>
            <person name="Liu B."/>
            <person name="Maccabe A."/>
            <person name="Meyer V."/>
            <person name="Mirabito P."/>
            <person name="Miskei M."/>
            <person name="Mos M."/>
            <person name="Mullins J."/>
            <person name="Nelson D.R."/>
            <person name="Nielsen J."/>
            <person name="Oakley B.R."/>
            <person name="Osmani S.A."/>
            <person name="Pakula T."/>
            <person name="Paszewski A."/>
            <person name="Paulsen I."/>
            <person name="Pilsyk S."/>
            <person name="Pocsi I."/>
            <person name="Punt P.J."/>
            <person name="Ram A.F."/>
            <person name="Ren Q."/>
            <person name="Robellet X."/>
            <person name="Robson G."/>
            <person name="Seiboth B."/>
            <person name="van Solingen P."/>
            <person name="Specht T."/>
            <person name="Sun J."/>
            <person name="Taheri-Talesh N."/>
            <person name="Takeshita N."/>
            <person name="Ussery D."/>
            <person name="vanKuyk P.A."/>
            <person name="Visser H."/>
            <person name="van de Vondervoort P.J."/>
            <person name="de Vries R.P."/>
            <person name="Walton J."/>
            <person name="Xiang X."/>
            <person name="Xiong Y."/>
            <person name="Zeng A.P."/>
            <person name="Brandt B.W."/>
            <person name="Cornell M.J."/>
            <person name="van den Hondel C.A."/>
            <person name="Visser J."/>
            <person name="Oliver S.G."/>
            <person name="Turner G."/>
        </authorList>
    </citation>
    <scope>GENOME REANNOTATION</scope>
    <source>
        <strain>FGSC A4 / ATCC 38163 / CBS 112.46 / NRRL 194 / M139</strain>
    </source>
</reference>
<reference key="3">
    <citation type="journal article" date="2017" name="Open Biol.">
        <title>A eukaryotic nicotinate-inducible gene cluster: convergent evolution in fungi and bacteria.</title>
        <authorList>
            <person name="Amon J."/>
            <person name="Fernandez-Martin R."/>
            <person name="Bokor E."/>
            <person name="Cultrone A."/>
            <person name="Kelly J.M."/>
            <person name="Flipphi M."/>
            <person name="Scazzocchio C."/>
            <person name="Hamari Z."/>
        </authorList>
    </citation>
    <scope>IDENTIFICATION</scope>
    <scope>INDUCTION</scope>
    <scope>FUNCTION</scope>
</reference>
<protein>
    <recommendedName>
        <fullName>Major facilitator-type transporter hxnP</fullName>
    </recommendedName>
    <alternativeName>
        <fullName evidence="5">Nicotinate catabolism cluster protein hxnP</fullName>
    </alternativeName>
</protein>
<gene>
    <name evidence="5" type="primary">hxnP</name>
    <name type="ORF">ANIA_11189</name>
</gene>
<name>HXNP_EMENI</name>
<sequence>MGATATDIEKVPSAGTPDEPKAGETNVYVDTEAEKSFVRKVDFFVLPMLCLMYFFDCMDRSNLANAKTDGLEEDINLKGNEYSLLILLFYIPFGLFDLPWNLLIKRYSARIMLSLRRYAVTVVWGICALCQCAANNFGGLLAIRIILGVFEAGFFAGSTFYFTLFYTRNEMGFRLAVLQSFAVLASAFSGLISFGLFQINHSAVKGWQWLFIVEGAMTLIIGVIGFWWLPDTAQSAWFLTQRERDAASARLLRDTSAEIETKLELKAAFQTWSDWKFPIWAVITFSYPVAYATAMNFFPIIVARLGYSVVKTNLWTVAPNLVGAVVLLVVAKSSDIFRERSLHIIFSLTVSLVGMLILASIDVSHNKGVSYFACFLLASGAYIPTCLVHAWHNNNNTNENSRAANTGFFVGLGNIAGVLSAATFRTEYAPKYVPTLVATCACNGVCILATAFMGTWMRLENRRKDKEQGARIVAGQVETRMLADGEKSPEWRYFL</sequence>
<accession>C8VJW1</accession>
<dbReference type="EMBL" id="BN001306">
    <property type="protein sequence ID" value="CBF82384.1"/>
    <property type="molecule type" value="Genomic_DNA"/>
</dbReference>
<dbReference type="SMR" id="C8VJW1"/>
<dbReference type="STRING" id="227321.C8VJW1"/>
<dbReference type="GlyCosmos" id="C8VJW1">
    <property type="glycosylation" value="2 sites, No reported glycans"/>
</dbReference>
<dbReference type="EnsemblFungi" id="CBF82384">
    <property type="protein sequence ID" value="CBF82384"/>
    <property type="gene ID" value="ANIA_11189"/>
</dbReference>
<dbReference type="VEuPathDB" id="FungiDB:AN11189"/>
<dbReference type="eggNOG" id="KOG2533">
    <property type="taxonomic scope" value="Eukaryota"/>
</dbReference>
<dbReference type="HOGENOM" id="CLU_001265_0_1_1"/>
<dbReference type="InParanoid" id="C8VJW1"/>
<dbReference type="OMA" id="LWMRREN"/>
<dbReference type="OrthoDB" id="2985014at2759"/>
<dbReference type="Proteomes" id="UP000000560">
    <property type="component" value="Chromosome VI"/>
</dbReference>
<dbReference type="GO" id="GO:0016020">
    <property type="term" value="C:membrane"/>
    <property type="evidence" value="ECO:0000318"/>
    <property type="project" value="GO_Central"/>
</dbReference>
<dbReference type="GO" id="GO:0005886">
    <property type="term" value="C:plasma membrane"/>
    <property type="evidence" value="ECO:0007669"/>
    <property type="project" value="UniProtKB-SubCell"/>
</dbReference>
<dbReference type="GO" id="GO:0022857">
    <property type="term" value="F:transmembrane transporter activity"/>
    <property type="evidence" value="ECO:0000318"/>
    <property type="project" value="GO_Central"/>
</dbReference>
<dbReference type="FunFam" id="1.20.1250.20:FF:000013">
    <property type="entry name" value="MFS general substrate transporter"/>
    <property type="match status" value="1"/>
</dbReference>
<dbReference type="FunFam" id="1.20.1250.20:FF:000188">
    <property type="entry name" value="MFS general substrate transporter"/>
    <property type="match status" value="1"/>
</dbReference>
<dbReference type="Gene3D" id="1.20.1250.20">
    <property type="entry name" value="MFS general substrate transporter like domains"/>
    <property type="match status" value="2"/>
</dbReference>
<dbReference type="InterPro" id="IPR011701">
    <property type="entry name" value="MFS"/>
</dbReference>
<dbReference type="InterPro" id="IPR020846">
    <property type="entry name" value="MFS_dom"/>
</dbReference>
<dbReference type="InterPro" id="IPR036259">
    <property type="entry name" value="MFS_trans_sf"/>
</dbReference>
<dbReference type="PANTHER" id="PTHR43791:SF9">
    <property type="entry name" value="MAJOR FACILITATOR-TYPE TRANSPORTER HXNP"/>
    <property type="match status" value="1"/>
</dbReference>
<dbReference type="PANTHER" id="PTHR43791">
    <property type="entry name" value="PERMEASE-RELATED"/>
    <property type="match status" value="1"/>
</dbReference>
<dbReference type="Pfam" id="PF07690">
    <property type="entry name" value="MFS_1"/>
    <property type="match status" value="1"/>
</dbReference>
<dbReference type="SUPFAM" id="SSF103473">
    <property type="entry name" value="MFS general substrate transporter"/>
    <property type="match status" value="1"/>
</dbReference>
<dbReference type="PROSITE" id="PS50850">
    <property type="entry name" value="MFS"/>
    <property type="match status" value="1"/>
</dbReference>
<feature type="chain" id="PRO_0000443342" description="Major facilitator-type transporter hxnP">
    <location>
        <begin position="1"/>
        <end position="495"/>
    </location>
</feature>
<feature type="transmembrane region" description="Helical" evidence="1">
    <location>
        <begin position="36"/>
        <end position="55"/>
    </location>
</feature>
<feature type="transmembrane region" description="Helical" evidence="1">
    <location>
        <begin position="84"/>
        <end position="104"/>
    </location>
</feature>
<feature type="transmembrane region" description="Helical" evidence="1">
    <location>
        <begin position="123"/>
        <end position="143"/>
    </location>
</feature>
<feature type="transmembrane region" description="Helical" evidence="1">
    <location>
        <begin position="145"/>
        <end position="165"/>
    </location>
</feature>
<feature type="transmembrane region" description="Helical" evidence="1">
    <location>
        <begin position="177"/>
        <end position="197"/>
    </location>
</feature>
<feature type="transmembrane region" description="Helical" evidence="1">
    <location>
        <begin position="209"/>
        <end position="229"/>
    </location>
</feature>
<feature type="transmembrane region" description="Helical" evidence="1">
    <location>
        <begin position="282"/>
        <end position="302"/>
    </location>
</feature>
<feature type="transmembrane region" description="Helical" evidence="1">
    <location>
        <begin position="314"/>
        <end position="334"/>
    </location>
</feature>
<feature type="transmembrane region" description="Helical" evidence="1">
    <location>
        <begin position="341"/>
        <end position="361"/>
    </location>
</feature>
<feature type="transmembrane region" description="Helical" evidence="1">
    <location>
        <begin position="368"/>
        <end position="388"/>
    </location>
</feature>
<feature type="transmembrane region" description="Helical" evidence="1">
    <location>
        <begin position="404"/>
        <end position="424"/>
    </location>
</feature>
<feature type="transmembrane region" description="Helical" evidence="1">
    <location>
        <begin position="436"/>
        <end position="456"/>
    </location>
</feature>
<feature type="region of interest" description="Disordered" evidence="3">
    <location>
        <begin position="1"/>
        <end position="24"/>
    </location>
</feature>
<feature type="glycosylation site" description="N-linked (GlcNAc...) asparagine" evidence="2">
    <location>
        <position position="200"/>
    </location>
</feature>
<feature type="glycosylation site" description="N-linked (GlcNAc...) asparagine" evidence="2">
    <location>
        <position position="395"/>
    </location>
</feature>
<evidence type="ECO:0000255" key="1"/>
<evidence type="ECO:0000255" key="2">
    <source>
        <dbReference type="PROSITE-ProRule" id="PRU00498"/>
    </source>
</evidence>
<evidence type="ECO:0000256" key="3">
    <source>
        <dbReference type="SAM" id="MobiDB-lite"/>
    </source>
</evidence>
<evidence type="ECO:0000269" key="4">
    <source>
    </source>
</evidence>
<evidence type="ECO:0000303" key="5">
    <source>
    </source>
</evidence>
<evidence type="ECO:0000305" key="6">
    <source>
    </source>
</evidence>
<keyword id="KW-1003">Cell membrane</keyword>
<keyword id="KW-0325">Glycoprotein</keyword>
<keyword id="KW-0472">Membrane</keyword>
<keyword id="KW-1185">Reference proteome</keyword>
<keyword id="KW-0812">Transmembrane</keyword>
<keyword id="KW-1133">Transmembrane helix</keyword>
<keyword id="KW-0813">Transport</keyword>
<proteinExistence type="evidence at transcript level"/>
<comment type="function">
    <text evidence="4">Major facilitator-type transporter, part of the hnx cluster involved in the purine degradation (PubMed:29212709). The nicotinate hydroxylase hnxS accepts nicotinate as a substrate and catalyzes the first step of nicotinate catabolism (PubMed:29212709). The major facilitator-type transporters hxnP and hxnZ are probably involved in the uptake of nicotinate-derived metabolites, and the oxidoreductases hxnT and hxnY in the further metabolism of 6-OH nicotinic acid (PubMed:29212709).</text>
</comment>
<comment type="subcellular location">
    <subcellularLocation>
        <location evidence="6">Cell membrane</location>
        <topology evidence="1">Multi-pass membrane protein</topology>
    </subcellularLocation>
</comment>
<comment type="induction">
    <text evidence="4">Expression is induced by nicotinate and 6-OH nicotinate, subject to nitrogen metabolite repression mediated by the GATA factor areA, and strictly regulated by the cluster-specific transcription regulator hnxR (PubMed:29212709).</text>
</comment>
<comment type="similarity">
    <text evidence="1">Belongs to the major facilitator superfamily.</text>
</comment>